<gene>
    <name evidence="3" type="primary">PMP2</name>
</gene>
<comment type="function">
    <text evidence="1">May play a role in lipid transport protein in Schwann cells. May bind cholesterol (By similarity).</text>
</comment>
<comment type="subunit">
    <text evidence="1">Monomer.</text>
</comment>
<comment type="subcellular location">
    <subcellularLocation>
        <location evidence="1">Cytoplasm</location>
    </subcellularLocation>
</comment>
<comment type="domain">
    <text evidence="3">Forms a beta-barrel structure that accommodates hydrophobic ligands in its interior.</text>
</comment>
<comment type="mass spectrometry"/>
<comment type="miscellaneous">
    <text evidence="3">P2 protein and myelin basic protein together constitute a major fraction of peripheral nervous system myelin protein.</text>
</comment>
<comment type="similarity">
    <text evidence="4">Belongs to the calycin superfamily. Fatty-acid binding protein (FABP) family.</text>
</comment>
<evidence type="ECO:0000250" key="1"/>
<evidence type="ECO:0000250" key="2">
    <source>
        <dbReference type="UniProtKB" id="P02689"/>
    </source>
</evidence>
<evidence type="ECO:0000250" key="3">
    <source>
        <dbReference type="UniProtKB" id="P02690"/>
    </source>
</evidence>
<evidence type="ECO:0000255" key="4"/>
<evidence type="ECO:0000269" key="5">
    <source>
    </source>
</evidence>
<evidence type="ECO:0000303" key="6">
    <source>
    </source>
</evidence>
<evidence type="ECO:0000305" key="7"/>
<feature type="initiator methionine" description="Removed" evidence="5">
    <location>
        <position position="1"/>
    </location>
</feature>
<feature type="chain" id="PRO_0000397217" description="Myelin P2 protein" evidence="5">
    <location>
        <begin position="2"/>
        <end position="132"/>
    </location>
</feature>
<feature type="binding site" evidence="3">
    <location>
        <position position="107"/>
    </location>
    <ligand>
        <name>(9Z)-octadecenoate</name>
        <dbReference type="ChEBI" id="CHEBI:30823"/>
    </ligand>
</feature>
<feature type="binding site" evidence="2">
    <location>
        <position position="107"/>
    </location>
    <ligand>
        <name>hexadecanoate</name>
        <dbReference type="ChEBI" id="CHEBI:7896"/>
    </ligand>
</feature>
<feature type="binding site" evidence="3">
    <location>
        <begin position="127"/>
        <end position="129"/>
    </location>
    <ligand>
        <name>(9Z)-octadecenoate</name>
        <dbReference type="ChEBI" id="CHEBI:30823"/>
    </ligand>
</feature>
<feature type="binding site" evidence="2">
    <location>
        <begin position="127"/>
        <end position="129"/>
    </location>
    <ligand>
        <name>hexadecanoate</name>
        <dbReference type="ChEBI" id="CHEBI:7896"/>
    </ligand>
</feature>
<feature type="modified residue" description="N-acetylserine" evidence="5">
    <location>
        <position position="2"/>
    </location>
</feature>
<feature type="disulfide bond" evidence="3">
    <location>
        <begin position="118"/>
        <end position="125"/>
    </location>
</feature>
<accession>P86412</accession>
<keyword id="KW-0007">Acetylation</keyword>
<keyword id="KW-0963">Cytoplasm</keyword>
<keyword id="KW-0903">Direct protein sequencing</keyword>
<keyword id="KW-1015">Disulfide bond</keyword>
<keyword id="KW-0446">Lipid-binding</keyword>
<keyword id="KW-1185">Reference proteome</keyword>
<keyword id="KW-0813">Transport</keyword>
<reference evidence="7" key="1">
    <citation type="journal article" date="2005" name="BMC Biol.">
        <title>Comparative analysis of protein coding sequences from human, mouse and the domesticated pig.</title>
        <authorList>
            <person name="Jorgensen F.G."/>
            <person name="Hobolth A."/>
            <person name="Hornshoj H."/>
            <person name="Bendixen C."/>
            <person name="Fredholm M."/>
            <person name="Schierup M.H."/>
        </authorList>
    </citation>
    <scope>NUCLEOTIDE SEQUENCE [MRNA]</scope>
</reference>
<reference evidence="7" key="2">
    <citation type="journal article" date="2010" name="Anal. Bioanal. Chem.">
        <title>Porcine P2 myelin protein primary structure and bound fatty acids determined by mass spectrometry.</title>
        <authorList>
            <person name="Maddalo G."/>
            <person name="Shariatgorji M."/>
            <person name="Adams C.M."/>
            <person name="Fung E."/>
            <person name="Nilsson U."/>
            <person name="Zubarev R.A."/>
            <person name="Sedzik J."/>
            <person name="Ilag L.L."/>
        </authorList>
    </citation>
    <scope>PROTEIN SEQUENCE OF 2-132</scope>
    <scope>MASS SPECTROMETRY</scope>
    <scope>ACETYLATION AT SER-2</scope>
</reference>
<dbReference type="EMBL" id="AY610482">
    <property type="status" value="NOT_ANNOTATED_CDS"/>
    <property type="molecule type" value="mRNA"/>
</dbReference>
<dbReference type="RefSeq" id="NP_001171994.1">
    <property type="nucleotide sequence ID" value="NM_001185065.1"/>
</dbReference>
<dbReference type="RefSeq" id="XP_005663059.1">
    <property type="nucleotide sequence ID" value="XM_005663002.2"/>
</dbReference>
<dbReference type="RefSeq" id="XP_013852106.1">
    <property type="nucleotide sequence ID" value="XM_013996652.1"/>
</dbReference>
<dbReference type="RefSeq" id="XP_020944152.1">
    <property type="nucleotide sequence ID" value="XM_021088493.1"/>
</dbReference>
<dbReference type="SMR" id="P86412"/>
<dbReference type="FunCoup" id="P86412">
    <property type="interactions" value="452"/>
</dbReference>
<dbReference type="STRING" id="9823.ENSSSCP00000053111"/>
<dbReference type="iPTMnet" id="P86412"/>
<dbReference type="PaxDb" id="9823-ENSSSCP00000006563"/>
<dbReference type="PeptideAtlas" id="P86412"/>
<dbReference type="Ensembl" id="ENSSSCT00000052172.3">
    <property type="protein sequence ID" value="ENSSSCP00000053111.3"/>
    <property type="gene ID" value="ENSSSCG00000036441.3"/>
</dbReference>
<dbReference type="Ensembl" id="ENSSSCT00070032947.1">
    <property type="protein sequence ID" value="ENSSSCP00070027510.1"/>
    <property type="gene ID" value="ENSSSCG00070016714.1"/>
</dbReference>
<dbReference type="Ensembl" id="ENSSSCT00070032958.1">
    <property type="protein sequence ID" value="ENSSSCP00070027521.1"/>
    <property type="gene ID" value="ENSSSCG00070016714.1"/>
</dbReference>
<dbReference type="Ensembl" id="ENSSSCT00085018692">
    <property type="protein sequence ID" value="ENSSSCP00085012807"/>
    <property type="gene ID" value="ENSSSCG00085010068"/>
</dbReference>
<dbReference type="Ensembl" id="ENSSSCT00090029735">
    <property type="protein sequence ID" value="ENSSSCP00090018397"/>
    <property type="gene ID" value="ENSSSCG00090016876"/>
</dbReference>
<dbReference type="Ensembl" id="ENSSSCT00105002756">
    <property type="protein sequence ID" value="ENSSSCP00105002030"/>
    <property type="gene ID" value="ENSSSCG00105001437"/>
</dbReference>
<dbReference type="Ensembl" id="ENSSSCT00110000842">
    <property type="protein sequence ID" value="ENSSSCP00110000651"/>
    <property type="gene ID" value="ENSSSCG00110000439"/>
</dbReference>
<dbReference type="Ensembl" id="ENSSSCT00115021433">
    <property type="protein sequence ID" value="ENSSSCP00115020299"/>
    <property type="gene ID" value="ENSSSCG00115012406"/>
</dbReference>
<dbReference type="Ensembl" id="ENSSSCT00130004009">
    <property type="protein sequence ID" value="ENSSSCP00130002914"/>
    <property type="gene ID" value="ENSSSCG00130002063"/>
</dbReference>
<dbReference type="GeneID" id="100151890"/>
<dbReference type="KEGG" id="ssc:100151890"/>
<dbReference type="CTD" id="5375"/>
<dbReference type="eggNOG" id="KOG4015">
    <property type="taxonomic scope" value="Eukaryota"/>
</dbReference>
<dbReference type="GeneTree" id="ENSGT00940000160445"/>
<dbReference type="HOGENOM" id="CLU_113772_0_0_1"/>
<dbReference type="InParanoid" id="P86412"/>
<dbReference type="OMA" id="LTAKCIM"/>
<dbReference type="OrthoDB" id="412780at2759"/>
<dbReference type="TreeFam" id="TF316894"/>
<dbReference type="Proteomes" id="UP000008227">
    <property type="component" value="Chromosome 4"/>
</dbReference>
<dbReference type="Proteomes" id="UP000314985">
    <property type="component" value="Chromosome 4"/>
</dbReference>
<dbReference type="Proteomes" id="UP000694570">
    <property type="component" value="Unplaced"/>
</dbReference>
<dbReference type="Proteomes" id="UP000694571">
    <property type="component" value="Unplaced"/>
</dbReference>
<dbReference type="Proteomes" id="UP000694720">
    <property type="component" value="Unplaced"/>
</dbReference>
<dbReference type="Proteomes" id="UP000694722">
    <property type="component" value="Unplaced"/>
</dbReference>
<dbReference type="Proteomes" id="UP000694723">
    <property type="component" value="Unplaced"/>
</dbReference>
<dbReference type="Proteomes" id="UP000694724">
    <property type="component" value="Unplaced"/>
</dbReference>
<dbReference type="Proteomes" id="UP000694725">
    <property type="component" value="Unplaced"/>
</dbReference>
<dbReference type="Proteomes" id="UP000694726">
    <property type="component" value="Unplaced"/>
</dbReference>
<dbReference type="Proteomes" id="UP000694727">
    <property type="component" value="Unplaced"/>
</dbReference>
<dbReference type="Proteomes" id="UP000694728">
    <property type="component" value="Unplaced"/>
</dbReference>
<dbReference type="GO" id="GO:0005737">
    <property type="term" value="C:cytoplasm"/>
    <property type="evidence" value="ECO:0007669"/>
    <property type="project" value="UniProtKB-SubCell"/>
</dbReference>
<dbReference type="GO" id="GO:0043209">
    <property type="term" value="C:myelin sheath"/>
    <property type="evidence" value="ECO:0007669"/>
    <property type="project" value="InterPro"/>
</dbReference>
<dbReference type="GO" id="GO:0015485">
    <property type="term" value="F:cholesterol binding"/>
    <property type="evidence" value="ECO:0000250"/>
    <property type="project" value="UniProtKB"/>
</dbReference>
<dbReference type="GO" id="GO:0005504">
    <property type="term" value="F:fatty acid binding"/>
    <property type="evidence" value="ECO:0000250"/>
    <property type="project" value="UniProtKB"/>
</dbReference>
<dbReference type="GO" id="GO:0061024">
    <property type="term" value="P:membrane organization"/>
    <property type="evidence" value="ECO:0007669"/>
    <property type="project" value="Ensembl"/>
</dbReference>
<dbReference type="CDD" id="cd19469">
    <property type="entry name" value="FABP8"/>
    <property type="match status" value="1"/>
</dbReference>
<dbReference type="FunFam" id="2.40.128.20:FF:000001">
    <property type="entry name" value="Fatty acid-binding protein, adipocyte"/>
    <property type="match status" value="1"/>
</dbReference>
<dbReference type="Gene3D" id="2.40.128.20">
    <property type="match status" value="1"/>
</dbReference>
<dbReference type="InterPro" id="IPR012674">
    <property type="entry name" value="Calycin"/>
</dbReference>
<dbReference type="InterPro" id="IPR000463">
    <property type="entry name" value="Fatty_acid-bd"/>
</dbReference>
<dbReference type="InterPro" id="IPR031259">
    <property type="entry name" value="ILBP"/>
</dbReference>
<dbReference type="InterPro" id="IPR000566">
    <property type="entry name" value="Lipocln_cytosolic_FA-bd_dom"/>
</dbReference>
<dbReference type="InterPro" id="IPR031256">
    <property type="entry name" value="Myelin_P2"/>
</dbReference>
<dbReference type="PANTHER" id="PTHR11955">
    <property type="entry name" value="FATTY ACID BINDING PROTEIN"/>
    <property type="match status" value="1"/>
</dbReference>
<dbReference type="Pfam" id="PF00061">
    <property type="entry name" value="Lipocalin"/>
    <property type="match status" value="1"/>
</dbReference>
<dbReference type="PRINTS" id="PR00178">
    <property type="entry name" value="FATTYACIDBP"/>
</dbReference>
<dbReference type="SUPFAM" id="SSF50814">
    <property type="entry name" value="Lipocalins"/>
    <property type="match status" value="1"/>
</dbReference>
<dbReference type="PROSITE" id="PS00214">
    <property type="entry name" value="FABP"/>
    <property type="match status" value="1"/>
</dbReference>
<name>MYP2_PIG</name>
<organism>
    <name type="scientific">Sus scrofa</name>
    <name type="common">Pig</name>
    <dbReference type="NCBI Taxonomy" id="9823"/>
    <lineage>
        <taxon>Eukaryota</taxon>
        <taxon>Metazoa</taxon>
        <taxon>Chordata</taxon>
        <taxon>Craniata</taxon>
        <taxon>Vertebrata</taxon>
        <taxon>Euteleostomi</taxon>
        <taxon>Mammalia</taxon>
        <taxon>Eutheria</taxon>
        <taxon>Laurasiatheria</taxon>
        <taxon>Artiodactyla</taxon>
        <taxon>Suina</taxon>
        <taxon>Suidae</taxon>
        <taxon>Sus</taxon>
    </lineage>
</organism>
<proteinExistence type="evidence at protein level"/>
<sequence>MSNKFLGTWKLVSSENFDDYMKALGVGLATRKLGNLAKPRVIISKKGDIITIRTESTFKNTEISFKLGQEFEETTADNRKAKSVVTLARGSLNQVQKWDGKETTIKRKLVDGKMVVECKMKDVVCTRIYEKV</sequence>
<protein>
    <recommendedName>
        <fullName evidence="6">Myelin P2 protein</fullName>
    </recommendedName>
</protein>